<evidence type="ECO:0000255" key="1">
    <source>
        <dbReference type="HAMAP-Rule" id="MF_01631"/>
    </source>
</evidence>
<keyword id="KW-0012">Acyltransferase</keyword>
<keyword id="KW-0133">Cell shape</keyword>
<keyword id="KW-0961">Cell wall biogenesis/degradation</keyword>
<keyword id="KW-0963">Cytoplasm</keyword>
<keyword id="KW-0460">Magnesium</keyword>
<keyword id="KW-0479">Metal-binding</keyword>
<keyword id="KW-0511">Multifunctional enzyme</keyword>
<keyword id="KW-0548">Nucleotidyltransferase</keyword>
<keyword id="KW-0573">Peptidoglycan synthesis</keyword>
<keyword id="KW-0677">Repeat</keyword>
<keyword id="KW-0808">Transferase</keyword>
<proteinExistence type="inferred from homology"/>
<comment type="function">
    <text evidence="1">Catalyzes the last two sequential reactions in the de novo biosynthetic pathway for UDP-N-acetylglucosamine (UDP-GlcNAc). The C-terminal domain catalyzes the transfer of acetyl group from acetyl coenzyme A to glucosamine-1-phosphate (GlcN-1-P) to produce N-acetylglucosamine-1-phosphate (GlcNAc-1-P), which is converted into UDP-GlcNAc by the transfer of uridine 5-monophosphate (from uridine 5-triphosphate), a reaction catalyzed by the N-terminal domain.</text>
</comment>
<comment type="catalytic activity">
    <reaction evidence="1">
        <text>alpha-D-glucosamine 1-phosphate + acetyl-CoA = N-acetyl-alpha-D-glucosamine 1-phosphate + CoA + H(+)</text>
        <dbReference type="Rhea" id="RHEA:13725"/>
        <dbReference type="ChEBI" id="CHEBI:15378"/>
        <dbReference type="ChEBI" id="CHEBI:57287"/>
        <dbReference type="ChEBI" id="CHEBI:57288"/>
        <dbReference type="ChEBI" id="CHEBI:57776"/>
        <dbReference type="ChEBI" id="CHEBI:58516"/>
        <dbReference type="EC" id="2.3.1.157"/>
    </reaction>
</comment>
<comment type="catalytic activity">
    <reaction evidence="1">
        <text>N-acetyl-alpha-D-glucosamine 1-phosphate + UTP + H(+) = UDP-N-acetyl-alpha-D-glucosamine + diphosphate</text>
        <dbReference type="Rhea" id="RHEA:13509"/>
        <dbReference type="ChEBI" id="CHEBI:15378"/>
        <dbReference type="ChEBI" id="CHEBI:33019"/>
        <dbReference type="ChEBI" id="CHEBI:46398"/>
        <dbReference type="ChEBI" id="CHEBI:57705"/>
        <dbReference type="ChEBI" id="CHEBI:57776"/>
        <dbReference type="EC" id="2.7.7.23"/>
    </reaction>
</comment>
<comment type="cofactor">
    <cofactor evidence="1">
        <name>Mg(2+)</name>
        <dbReference type="ChEBI" id="CHEBI:18420"/>
    </cofactor>
    <text evidence="1">Binds 1 Mg(2+) ion per subunit.</text>
</comment>
<comment type="pathway">
    <text evidence="1">Nucleotide-sugar biosynthesis; UDP-N-acetyl-alpha-D-glucosamine biosynthesis; N-acetyl-alpha-D-glucosamine 1-phosphate from alpha-D-glucosamine 6-phosphate (route II): step 2/2.</text>
</comment>
<comment type="pathway">
    <text evidence="1">Nucleotide-sugar biosynthesis; UDP-N-acetyl-alpha-D-glucosamine biosynthesis; UDP-N-acetyl-alpha-D-glucosamine from N-acetyl-alpha-D-glucosamine 1-phosphate: step 1/1.</text>
</comment>
<comment type="pathway">
    <text evidence="1">Bacterial outer membrane biogenesis; LPS lipid A biosynthesis.</text>
</comment>
<comment type="subunit">
    <text evidence="1">Homotrimer.</text>
</comment>
<comment type="subcellular location">
    <subcellularLocation>
        <location evidence="1">Cytoplasm</location>
    </subcellularLocation>
</comment>
<comment type="similarity">
    <text evidence="1">In the N-terminal section; belongs to the N-acetylglucosamine-1-phosphate uridyltransferase family.</text>
</comment>
<comment type="similarity">
    <text evidence="1">In the C-terminal section; belongs to the transferase hexapeptide repeat family.</text>
</comment>
<organism>
    <name type="scientific">Clostridium beijerinckii (strain ATCC 51743 / NCIMB 8052)</name>
    <name type="common">Clostridium acetobutylicum</name>
    <dbReference type="NCBI Taxonomy" id="290402"/>
    <lineage>
        <taxon>Bacteria</taxon>
        <taxon>Bacillati</taxon>
        <taxon>Bacillota</taxon>
        <taxon>Clostridia</taxon>
        <taxon>Eubacteriales</taxon>
        <taxon>Clostridiaceae</taxon>
        <taxon>Clostridium</taxon>
    </lineage>
</organism>
<sequence>MYKCALVLAAGQGKRIKSDLPKVLHKVCGKEMLKHVIDSIRKSGIDDIDVIIGKGAELVKERTLDRNVSYSMQAEQLGTGHAVKCAEEFLKDKKGVVAIFTGDTPLIKQSTIERLFNEHIEAKNSATILTAIVNDPTGYGRIVRTNDGVSKIVEHKDCTEEELKINEMNSGIYCFDIELLVDALNKITNNNGQGEYYLTDAIGILKSQGKKIGAVVTEYEETIGVNSRVQLAEAEEILKNRINLMHMENGVTLIDPRTTYIGIDVEIGKDTIIYPNNILEGNTKIGNNCLIYQNSRIVDSNIGNEVDVQASVILNSNIGDNTTVGPFAYIRPETTIGKHARIGDFVEIKKSTIGDGTKVSHLTYIGDAEVGSECNFGCGTVVVNYDGKNKHKTIIGDHSFIGCNTNLVSPVTIHDNTYIAAGSTITSEVKEGDLAVARAKQRNISGWVDKKGLKK</sequence>
<feature type="chain" id="PRO_1000088126" description="Bifunctional protein GlmU">
    <location>
        <begin position="1"/>
        <end position="455"/>
    </location>
</feature>
<feature type="region of interest" description="Pyrophosphorylase" evidence="1">
    <location>
        <begin position="1"/>
        <end position="228"/>
    </location>
</feature>
<feature type="region of interest" description="Linker" evidence="1">
    <location>
        <begin position="229"/>
        <end position="249"/>
    </location>
</feature>
<feature type="region of interest" description="N-acetyltransferase" evidence="1">
    <location>
        <begin position="250"/>
        <end position="455"/>
    </location>
</feature>
<feature type="active site" description="Proton acceptor" evidence="1">
    <location>
        <position position="361"/>
    </location>
</feature>
<feature type="binding site" evidence="1">
    <location>
        <begin position="8"/>
        <end position="11"/>
    </location>
    <ligand>
        <name>UDP-N-acetyl-alpha-D-glucosamine</name>
        <dbReference type="ChEBI" id="CHEBI:57705"/>
    </ligand>
</feature>
<feature type="binding site" evidence="1">
    <location>
        <position position="22"/>
    </location>
    <ligand>
        <name>UDP-N-acetyl-alpha-D-glucosamine</name>
        <dbReference type="ChEBI" id="CHEBI:57705"/>
    </ligand>
</feature>
<feature type="binding site" evidence="1">
    <location>
        <position position="73"/>
    </location>
    <ligand>
        <name>UDP-N-acetyl-alpha-D-glucosamine</name>
        <dbReference type="ChEBI" id="CHEBI:57705"/>
    </ligand>
</feature>
<feature type="binding site" evidence="1">
    <location>
        <begin position="78"/>
        <end position="79"/>
    </location>
    <ligand>
        <name>UDP-N-acetyl-alpha-D-glucosamine</name>
        <dbReference type="ChEBI" id="CHEBI:57705"/>
    </ligand>
</feature>
<feature type="binding site" evidence="1">
    <location>
        <position position="103"/>
    </location>
    <ligand>
        <name>Mg(2+)</name>
        <dbReference type="ChEBI" id="CHEBI:18420"/>
    </ligand>
</feature>
<feature type="binding site" evidence="1">
    <location>
        <position position="140"/>
    </location>
    <ligand>
        <name>UDP-N-acetyl-alpha-D-glucosamine</name>
        <dbReference type="ChEBI" id="CHEBI:57705"/>
    </ligand>
</feature>
<feature type="binding site" evidence="1">
    <location>
        <position position="154"/>
    </location>
    <ligand>
        <name>UDP-N-acetyl-alpha-D-glucosamine</name>
        <dbReference type="ChEBI" id="CHEBI:57705"/>
    </ligand>
</feature>
<feature type="binding site" evidence="1">
    <location>
        <position position="169"/>
    </location>
    <ligand>
        <name>UDP-N-acetyl-alpha-D-glucosamine</name>
        <dbReference type="ChEBI" id="CHEBI:57705"/>
    </ligand>
</feature>
<feature type="binding site" evidence="1">
    <location>
        <position position="226"/>
    </location>
    <ligand>
        <name>Mg(2+)</name>
        <dbReference type="ChEBI" id="CHEBI:18420"/>
    </ligand>
</feature>
<feature type="binding site" evidence="1">
    <location>
        <position position="226"/>
    </location>
    <ligand>
        <name>UDP-N-acetyl-alpha-D-glucosamine</name>
        <dbReference type="ChEBI" id="CHEBI:57705"/>
    </ligand>
</feature>
<feature type="binding site" evidence="1">
    <location>
        <position position="331"/>
    </location>
    <ligand>
        <name>UDP-N-acetyl-alpha-D-glucosamine</name>
        <dbReference type="ChEBI" id="CHEBI:57705"/>
    </ligand>
</feature>
<feature type="binding site" evidence="1">
    <location>
        <position position="349"/>
    </location>
    <ligand>
        <name>UDP-N-acetyl-alpha-D-glucosamine</name>
        <dbReference type="ChEBI" id="CHEBI:57705"/>
    </ligand>
</feature>
<feature type="binding site" evidence="1">
    <location>
        <position position="364"/>
    </location>
    <ligand>
        <name>UDP-N-acetyl-alpha-D-glucosamine</name>
        <dbReference type="ChEBI" id="CHEBI:57705"/>
    </ligand>
</feature>
<feature type="binding site" evidence="1">
    <location>
        <position position="375"/>
    </location>
    <ligand>
        <name>UDP-N-acetyl-alpha-D-glucosamine</name>
        <dbReference type="ChEBI" id="CHEBI:57705"/>
    </ligand>
</feature>
<feature type="binding site" evidence="1">
    <location>
        <begin position="384"/>
        <end position="385"/>
    </location>
    <ligand>
        <name>acetyl-CoA</name>
        <dbReference type="ChEBI" id="CHEBI:57288"/>
    </ligand>
</feature>
<feature type="binding site" evidence="1">
    <location>
        <position position="421"/>
    </location>
    <ligand>
        <name>acetyl-CoA</name>
        <dbReference type="ChEBI" id="CHEBI:57288"/>
    </ligand>
</feature>
<feature type="binding site" evidence="1">
    <location>
        <position position="438"/>
    </location>
    <ligand>
        <name>acetyl-CoA</name>
        <dbReference type="ChEBI" id="CHEBI:57288"/>
    </ligand>
</feature>
<name>GLMU_CLOB8</name>
<gene>
    <name evidence="1" type="primary">glmU</name>
    <name type="ordered locus">Cbei_0081</name>
</gene>
<dbReference type="EC" id="2.7.7.23" evidence="1"/>
<dbReference type="EC" id="2.3.1.157" evidence="1"/>
<dbReference type="EMBL" id="CP000721">
    <property type="protein sequence ID" value="ABR32271.1"/>
    <property type="molecule type" value="Genomic_DNA"/>
</dbReference>
<dbReference type="RefSeq" id="WP_011967446.1">
    <property type="nucleotide sequence ID" value="NC_009617.1"/>
</dbReference>
<dbReference type="SMR" id="A6LPJ1"/>
<dbReference type="KEGG" id="cbe:Cbei_0081"/>
<dbReference type="eggNOG" id="COG1207">
    <property type="taxonomic scope" value="Bacteria"/>
</dbReference>
<dbReference type="HOGENOM" id="CLU_029499_15_2_9"/>
<dbReference type="UniPathway" id="UPA00113">
    <property type="reaction ID" value="UER00532"/>
</dbReference>
<dbReference type="UniPathway" id="UPA00113">
    <property type="reaction ID" value="UER00533"/>
</dbReference>
<dbReference type="UniPathway" id="UPA00973"/>
<dbReference type="Proteomes" id="UP000000565">
    <property type="component" value="Chromosome"/>
</dbReference>
<dbReference type="GO" id="GO:0005737">
    <property type="term" value="C:cytoplasm"/>
    <property type="evidence" value="ECO:0007669"/>
    <property type="project" value="UniProtKB-SubCell"/>
</dbReference>
<dbReference type="GO" id="GO:0016020">
    <property type="term" value="C:membrane"/>
    <property type="evidence" value="ECO:0007669"/>
    <property type="project" value="GOC"/>
</dbReference>
<dbReference type="GO" id="GO:0019134">
    <property type="term" value="F:glucosamine-1-phosphate N-acetyltransferase activity"/>
    <property type="evidence" value="ECO:0007669"/>
    <property type="project" value="UniProtKB-UniRule"/>
</dbReference>
<dbReference type="GO" id="GO:0000287">
    <property type="term" value="F:magnesium ion binding"/>
    <property type="evidence" value="ECO:0007669"/>
    <property type="project" value="UniProtKB-UniRule"/>
</dbReference>
<dbReference type="GO" id="GO:0003977">
    <property type="term" value="F:UDP-N-acetylglucosamine diphosphorylase activity"/>
    <property type="evidence" value="ECO:0007669"/>
    <property type="project" value="UniProtKB-UniRule"/>
</dbReference>
<dbReference type="GO" id="GO:0000902">
    <property type="term" value="P:cell morphogenesis"/>
    <property type="evidence" value="ECO:0007669"/>
    <property type="project" value="UniProtKB-UniRule"/>
</dbReference>
<dbReference type="GO" id="GO:0071555">
    <property type="term" value="P:cell wall organization"/>
    <property type="evidence" value="ECO:0007669"/>
    <property type="project" value="UniProtKB-KW"/>
</dbReference>
<dbReference type="GO" id="GO:0009245">
    <property type="term" value="P:lipid A biosynthetic process"/>
    <property type="evidence" value="ECO:0007669"/>
    <property type="project" value="UniProtKB-UniRule"/>
</dbReference>
<dbReference type="GO" id="GO:0009252">
    <property type="term" value="P:peptidoglycan biosynthetic process"/>
    <property type="evidence" value="ECO:0007669"/>
    <property type="project" value="UniProtKB-UniRule"/>
</dbReference>
<dbReference type="GO" id="GO:0008360">
    <property type="term" value="P:regulation of cell shape"/>
    <property type="evidence" value="ECO:0007669"/>
    <property type="project" value="UniProtKB-KW"/>
</dbReference>
<dbReference type="GO" id="GO:0006048">
    <property type="term" value="P:UDP-N-acetylglucosamine biosynthetic process"/>
    <property type="evidence" value="ECO:0007669"/>
    <property type="project" value="UniProtKB-UniPathway"/>
</dbReference>
<dbReference type="CDD" id="cd02540">
    <property type="entry name" value="GT2_GlmU_N_bac"/>
    <property type="match status" value="1"/>
</dbReference>
<dbReference type="CDD" id="cd03353">
    <property type="entry name" value="LbH_GlmU_C"/>
    <property type="match status" value="1"/>
</dbReference>
<dbReference type="Gene3D" id="2.160.10.10">
    <property type="entry name" value="Hexapeptide repeat proteins"/>
    <property type="match status" value="1"/>
</dbReference>
<dbReference type="Gene3D" id="3.90.550.10">
    <property type="entry name" value="Spore Coat Polysaccharide Biosynthesis Protein SpsA, Chain A"/>
    <property type="match status" value="1"/>
</dbReference>
<dbReference type="HAMAP" id="MF_01631">
    <property type="entry name" value="GlmU"/>
    <property type="match status" value="1"/>
</dbReference>
<dbReference type="InterPro" id="IPR005882">
    <property type="entry name" value="Bifunctional_GlmU"/>
</dbReference>
<dbReference type="InterPro" id="IPR050065">
    <property type="entry name" value="GlmU-like"/>
</dbReference>
<dbReference type="InterPro" id="IPR038009">
    <property type="entry name" value="GlmU_C_LbH"/>
</dbReference>
<dbReference type="InterPro" id="IPR001451">
    <property type="entry name" value="Hexapep"/>
</dbReference>
<dbReference type="InterPro" id="IPR005835">
    <property type="entry name" value="NTP_transferase_dom"/>
</dbReference>
<dbReference type="InterPro" id="IPR029044">
    <property type="entry name" value="Nucleotide-diphossugar_trans"/>
</dbReference>
<dbReference type="InterPro" id="IPR011004">
    <property type="entry name" value="Trimer_LpxA-like_sf"/>
</dbReference>
<dbReference type="NCBIfam" id="TIGR01173">
    <property type="entry name" value="glmU"/>
    <property type="match status" value="1"/>
</dbReference>
<dbReference type="NCBIfam" id="NF010934">
    <property type="entry name" value="PRK14354.1"/>
    <property type="match status" value="1"/>
</dbReference>
<dbReference type="PANTHER" id="PTHR43584:SF3">
    <property type="entry name" value="BIFUNCTIONAL PROTEIN GLMU"/>
    <property type="match status" value="1"/>
</dbReference>
<dbReference type="PANTHER" id="PTHR43584">
    <property type="entry name" value="NUCLEOTIDYL TRANSFERASE"/>
    <property type="match status" value="1"/>
</dbReference>
<dbReference type="Pfam" id="PF00132">
    <property type="entry name" value="Hexapep"/>
    <property type="match status" value="3"/>
</dbReference>
<dbReference type="Pfam" id="PF00483">
    <property type="entry name" value="NTP_transferase"/>
    <property type="match status" value="1"/>
</dbReference>
<dbReference type="SUPFAM" id="SSF53448">
    <property type="entry name" value="Nucleotide-diphospho-sugar transferases"/>
    <property type="match status" value="1"/>
</dbReference>
<dbReference type="SUPFAM" id="SSF51161">
    <property type="entry name" value="Trimeric LpxA-like enzymes"/>
    <property type="match status" value="1"/>
</dbReference>
<reference key="1">
    <citation type="submission" date="2007-06" db="EMBL/GenBank/DDBJ databases">
        <title>Complete sequence of Clostridium beijerinckii NCIMB 8052.</title>
        <authorList>
            <consortium name="US DOE Joint Genome Institute"/>
            <person name="Copeland A."/>
            <person name="Lucas S."/>
            <person name="Lapidus A."/>
            <person name="Barry K."/>
            <person name="Detter J.C."/>
            <person name="Glavina del Rio T."/>
            <person name="Hammon N."/>
            <person name="Israni S."/>
            <person name="Dalin E."/>
            <person name="Tice H."/>
            <person name="Pitluck S."/>
            <person name="Sims D."/>
            <person name="Brettin T."/>
            <person name="Bruce D."/>
            <person name="Tapia R."/>
            <person name="Brainard J."/>
            <person name="Schmutz J."/>
            <person name="Larimer F."/>
            <person name="Land M."/>
            <person name="Hauser L."/>
            <person name="Kyrpides N."/>
            <person name="Mikhailova N."/>
            <person name="Bennet G."/>
            <person name="Cann I."/>
            <person name="Chen J.-S."/>
            <person name="Contreras A.L."/>
            <person name="Jones D."/>
            <person name="Kashket E."/>
            <person name="Mitchell W."/>
            <person name="Stoddard S."/>
            <person name="Schwarz W."/>
            <person name="Qureshi N."/>
            <person name="Young M."/>
            <person name="Shi Z."/>
            <person name="Ezeji T."/>
            <person name="White B."/>
            <person name="Blaschek H."/>
            <person name="Richardson P."/>
        </authorList>
    </citation>
    <scope>NUCLEOTIDE SEQUENCE [LARGE SCALE GENOMIC DNA]</scope>
    <source>
        <strain>ATCC 51743 / NCIMB 8052</strain>
    </source>
</reference>
<accession>A6LPJ1</accession>
<protein>
    <recommendedName>
        <fullName evidence="1">Bifunctional protein GlmU</fullName>
    </recommendedName>
    <domain>
        <recommendedName>
            <fullName evidence="1">UDP-N-acetylglucosamine pyrophosphorylase</fullName>
            <ecNumber evidence="1">2.7.7.23</ecNumber>
        </recommendedName>
        <alternativeName>
            <fullName evidence="1">N-acetylglucosamine-1-phosphate uridyltransferase</fullName>
        </alternativeName>
    </domain>
    <domain>
        <recommendedName>
            <fullName evidence="1">Glucosamine-1-phosphate N-acetyltransferase</fullName>
            <ecNumber evidence="1">2.3.1.157</ecNumber>
        </recommendedName>
    </domain>
</protein>